<proteinExistence type="evidence at protein level"/>
<protein>
    <recommendedName>
        <fullName evidence="5">2-(S)-hydroxypropyl-CoM dehydrogenase 3</fullName>
        <shortName evidence="4">S-HPCDH 3</shortName>
        <ecNumber evidence="1">1.1.1.269</ecNumber>
    </recommendedName>
    <alternativeName>
        <fullName evidence="5">2-[(S)-2-hydroxypropylthio]ethanesulfonate dehydrogenase 3</fullName>
    </alternativeName>
    <alternativeName>
        <fullName>Aliphatic epoxide carboxylation component IV</fullName>
    </alternativeName>
    <alternativeName>
        <fullName>Epoxide carboxylase component IV</fullName>
    </alternativeName>
    <alternativeName>
        <fullName evidence="3">SHPCDH3</fullName>
    </alternativeName>
</protein>
<evidence type="ECO:0000269" key="1">
    <source>
    </source>
</evidence>
<evidence type="ECO:0000269" key="2">
    <source>
    </source>
</evidence>
<evidence type="ECO:0000303" key="3">
    <source>
    </source>
</evidence>
<evidence type="ECO:0000303" key="4">
    <source>
    </source>
</evidence>
<evidence type="ECO:0000305" key="5"/>
<evidence type="ECO:0000305" key="6">
    <source>
    </source>
</evidence>
<evidence type="ECO:0000305" key="7">
    <source>
    </source>
</evidence>
<evidence type="ECO:0000312" key="8">
    <source>
        <dbReference type="EMBL" id="ABS70271.1"/>
    </source>
</evidence>
<evidence type="ECO:0007744" key="9">
    <source>
        <dbReference type="PDB" id="4GH5"/>
    </source>
</evidence>
<evidence type="ECO:0007744" key="10">
    <source>
        <dbReference type="PDB" id="4ITU"/>
    </source>
</evidence>
<evidence type="ECO:0007829" key="11">
    <source>
        <dbReference type="PDB" id="4GH5"/>
    </source>
</evidence>
<gene>
    <name evidence="3" type="primary">xecE3</name>
    <name evidence="8" type="ordered locus">Xaut_5073</name>
</gene>
<organism>
    <name type="scientific">Xanthobacter autotrophicus (strain ATCC BAA-1158 / Py2)</name>
    <dbReference type="NCBI Taxonomy" id="78245"/>
    <lineage>
        <taxon>Bacteria</taxon>
        <taxon>Pseudomonadati</taxon>
        <taxon>Pseudomonadota</taxon>
        <taxon>Alphaproteobacteria</taxon>
        <taxon>Hyphomicrobiales</taxon>
        <taxon>Xanthobacteraceae</taxon>
        <taxon>Xanthobacter</taxon>
    </lineage>
</organism>
<name>HCDS3_XANP2</name>
<reference key="1">
    <citation type="submission" date="2007-07" db="EMBL/GenBank/DDBJ databases">
        <title>Complete sequence of plasmid pXAUT01 of Xanthobacter autotrophicus Py2.</title>
        <authorList>
            <consortium name="US DOE Joint Genome Institute"/>
            <person name="Copeland A."/>
            <person name="Lucas S."/>
            <person name="Lapidus A."/>
            <person name="Barry K."/>
            <person name="Glavina del Rio T."/>
            <person name="Hammon N."/>
            <person name="Israni S."/>
            <person name="Dalin E."/>
            <person name="Tice H."/>
            <person name="Pitluck S."/>
            <person name="Sims D."/>
            <person name="Brettin T."/>
            <person name="Bruce D."/>
            <person name="Detter J.C."/>
            <person name="Han C."/>
            <person name="Tapia R."/>
            <person name="Brainard J."/>
            <person name="Schmutz J."/>
            <person name="Larimer F."/>
            <person name="Land M."/>
            <person name="Hauser L."/>
            <person name="Kyrpides N."/>
            <person name="Kim E."/>
            <person name="Ensigns S.A."/>
            <person name="Richardson P."/>
        </authorList>
    </citation>
    <scope>NUCLEOTIDE SEQUENCE [LARGE SCALE GENOMIC DNA]</scope>
    <source>
        <strain>ATCC BAA-1158 / Py2</strain>
    </source>
</reference>
<reference key="2">
    <citation type="journal article" date="2010" name="Biochemistry">
        <title>Molecular basis for enantioselectivity in the (R)- and (S)-hydroxypropylthioethanesulfonate dehydrogenases, a unique pair of stereoselective short-chain dehydrogenases/reductases involved in aliphatic epoxide carboxylation.</title>
        <authorList>
            <person name="Sliwa D.A."/>
            <person name="Krishnakumar A.M."/>
            <person name="Peters J.W."/>
            <person name="Ensign S.A."/>
        </authorList>
    </citation>
    <scope>FUNCTION</scope>
    <scope>CATALYTIC ACTIVITY</scope>
    <scope>ACTIVITY REGULATION</scope>
    <scope>BIOPHYSICOCHEMICAL PROPERTIES</scope>
    <scope>MUTAGENESIS OF SER-143; TYR-156; LYS-160; ARG-211 AND LYS-214</scope>
    <scope>ACTIVE SITES</scope>
    <source>
        <strain>ATCC BAA-1158 / Py2</strain>
    </source>
</reference>
<reference evidence="9 10" key="3">
    <citation type="journal article" date="2013" name="Arch. Biochem. Biophys.">
        <title>Crystal structures of S-HPCDH reveal determinants of stereospecificity for R- and S-hydroxypropyl-coenzyme M dehydrogenases.</title>
        <authorList>
            <person name="Bakelar J.W."/>
            <person name="Sliwa D.A."/>
            <person name="Johnson S.J."/>
        </authorList>
    </citation>
    <scope>X-RAY CRYSTALLOGRAPHY (1.60 ANGSTROMS) IN COMPLEX WITH NAD AND (S)-2-HYDROXYPROPYL-COENZYME M</scope>
    <scope>SUBUNIT</scope>
    <scope>ACTIVE SITES</scope>
</reference>
<dbReference type="EC" id="1.1.1.269" evidence="1"/>
<dbReference type="EMBL" id="CP000782">
    <property type="protein sequence ID" value="ABS70271.1"/>
    <property type="molecule type" value="Genomic_DNA"/>
</dbReference>
<dbReference type="PDB" id="4GH5">
    <property type="method" value="X-ray"/>
    <property type="resolution" value="1.60 A"/>
    <property type="chains" value="A/B/C/D=1-255"/>
</dbReference>
<dbReference type="PDB" id="4ITU">
    <property type="method" value="X-ray"/>
    <property type="resolution" value="1.60 A"/>
    <property type="chains" value="A/B/C/D=1-255"/>
</dbReference>
<dbReference type="PDBsum" id="4GH5"/>
<dbReference type="PDBsum" id="4ITU"/>
<dbReference type="SMR" id="A7IQH5"/>
<dbReference type="KEGG" id="xau:Xaut_5073"/>
<dbReference type="eggNOG" id="COG1028">
    <property type="taxonomic scope" value="Bacteria"/>
</dbReference>
<dbReference type="HOGENOM" id="CLU_010194_1_2_5"/>
<dbReference type="OrthoDB" id="7568484at2"/>
<dbReference type="PhylomeDB" id="A7IQH5"/>
<dbReference type="BRENDA" id="1.1.1.269">
    <property type="organism ID" value="1641"/>
</dbReference>
<dbReference type="EvolutionaryTrace" id="A7IQH5"/>
<dbReference type="Proteomes" id="UP000002417">
    <property type="component" value="Plasmid pXAUT01"/>
</dbReference>
<dbReference type="GO" id="GO:0000166">
    <property type="term" value="F:nucleotide binding"/>
    <property type="evidence" value="ECO:0007669"/>
    <property type="project" value="UniProtKB-KW"/>
</dbReference>
<dbReference type="GO" id="GO:0016616">
    <property type="term" value="F:oxidoreductase activity, acting on the CH-OH group of donors, NAD or NADP as acceptor"/>
    <property type="evidence" value="ECO:0007669"/>
    <property type="project" value="TreeGrafter"/>
</dbReference>
<dbReference type="GO" id="GO:0048038">
    <property type="term" value="F:quinone binding"/>
    <property type="evidence" value="ECO:0007669"/>
    <property type="project" value="TreeGrafter"/>
</dbReference>
<dbReference type="GO" id="GO:0006633">
    <property type="term" value="P:fatty acid biosynthetic process"/>
    <property type="evidence" value="ECO:0007669"/>
    <property type="project" value="TreeGrafter"/>
</dbReference>
<dbReference type="CDD" id="cd05233">
    <property type="entry name" value="SDR_c"/>
    <property type="match status" value="1"/>
</dbReference>
<dbReference type="FunFam" id="3.40.50.720:FF:000084">
    <property type="entry name" value="Short-chain dehydrogenase reductase"/>
    <property type="match status" value="1"/>
</dbReference>
<dbReference type="Gene3D" id="3.40.50.720">
    <property type="entry name" value="NAD(P)-binding Rossmann-like Domain"/>
    <property type="match status" value="1"/>
</dbReference>
<dbReference type="InterPro" id="IPR036291">
    <property type="entry name" value="NAD(P)-bd_dom_sf"/>
</dbReference>
<dbReference type="InterPro" id="IPR020904">
    <property type="entry name" value="Sc_DH/Rdtase_CS"/>
</dbReference>
<dbReference type="InterPro" id="IPR002347">
    <property type="entry name" value="SDR_fam"/>
</dbReference>
<dbReference type="NCBIfam" id="NF005559">
    <property type="entry name" value="PRK07231.1"/>
    <property type="match status" value="1"/>
</dbReference>
<dbReference type="PANTHER" id="PTHR42760:SF122">
    <property type="entry name" value="NAD(P)-BINDING PROTEIN"/>
    <property type="match status" value="1"/>
</dbReference>
<dbReference type="PANTHER" id="PTHR42760">
    <property type="entry name" value="SHORT-CHAIN DEHYDROGENASES/REDUCTASES FAMILY MEMBER"/>
    <property type="match status" value="1"/>
</dbReference>
<dbReference type="Pfam" id="PF13561">
    <property type="entry name" value="adh_short_C2"/>
    <property type="match status" value="1"/>
</dbReference>
<dbReference type="PRINTS" id="PR00081">
    <property type="entry name" value="GDHRDH"/>
</dbReference>
<dbReference type="PRINTS" id="PR00080">
    <property type="entry name" value="SDRFAMILY"/>
</dbReference>
<dbReference type="SMART" id="SM00822">
    <property type="entry name" value="PKS_KR"/>
    <property type="match status" value="1"/>
</dbReference>
<dbReference type="SUPFAM" id="SSF51735">
    <property type="entry name" value="NAD(P)-binding Rossmann-fold domains"/>
    <property type="match status" value="1"/>
</dbReference>
<dbReference type="PROSITE" id="PS00061">
    <property type="entry name" value="ADH_SHORT"/>
    <property type="match status" value="1"/>
</dbReference>
<keyword id="KW-0002">3D-structure</keyword>
<keyword id="KW-0520">NAD</keyword>
<keyword id="KW-0547">Nucleotide-binding</keyword>
<keyword id="KW-0560">Oxidoreductase</keyword>
<keyword id="KW-0614">Plasmid</keyword>
<keyword id="KW-1185">Reference proteome</keyword>
<comment type="function">
    <text evidence="1">Involved in aliphatic epoxide carboxylation (PubMed:20302306). Catalyzes the reversible oxidation of (2S)-2-hydroxypropyl-coenzyme M (S-HPC) to 2-oxopropyl-coenzyme M (2-KPC) (PubMed:20302306). The enzyme is highly specific for the S enantiomers (PubMed:20302306). In vitro can also use the aliphatic ketone 2-butanone and the aliphatic alcohol 2-propanol, and shows an inherent stereoselectivity for 2-butanone reduction (PubMed:20302306).</text>
</comment>
<comment type="catalytic activity">
    <reaction evidence="1">
        <text>(S)-2-hydroxypropyl-coenzyme M + NAD(+) = 2-oxopropyl-coenzyme M + NADH + H(+)</text>
        <dbReference type="Rhea" id="RHEA:21052"/>
        <dbReference type="ChEBI" id="CHEBI:15378"/>
        <dbReference type="ChEBI" id="CHEBI:57540"/>
        <dbReference type="ChEBI" id="CHEBI:57552"/>
        <dbReference type="ChEBI" id="CHEBI:57945"/>
        <dbReference type="ChEBI" id="CHEBI:58430"/>
        <dbReference type="EC" id="1.1.1.269"/>
    </reaction>
    <physiologicalReaction direction="left-to-right" evidence="1">
        <dbReference type="Rhea" id="RHEA:21053"/>
    </physiologicalReaction>
</comment>
<comment type="activity regulation">
    <text evidence="1">Not inhibited by 2-(2-methyl-2-hydroxypropylthio)ethanesulfonate (M-HPC), an achiral analog of both R-HPC and S-HPC.</text>
</comment>
<comment type="biophysicochemical properties">
    <kinetics>
        <KM evidence="1">31 uM for S-HPC</KM>
        <KM evidence="1">270 uM for 2-KPC</KM>
        <KM evidence="1">9100 uM for R-HPC</KM>
        <KM evidence="1">120 mM for 2-butanone</KM>
        <KM evidence="1">1400 mM for 2-propanol</KM>
        <KM evidence="1">68 mM for (R)-2-butanol</KM>
        <KM evidence="1">28 mM for (S)-2-butanol</KM>
        <KM evidence="1">191 uM for NAD(+)</KM>
        <KM evidence="1">8.42 uM for NADH</KM>
        <text evidence="1">kcat is 5.5 sec(-1) with R-HPC as substrate. kcat is 25 sec(-1) with S-HPC as substrate. kcat is 11 sec(-1) with 2-KPC as substrate. kcat is 0.044 sec(-1) with 2-butanone as substrate. kcat is 2.0 sec(-1) with 2-propanol as substrate. kcat is 1.0 sec(-1) with (R)-2-butanol as substrate. kcat is 2.6 sec(-1) with (S)-2-butanol as substrate.</text>
    </kinetics>
</comment>
<comment type="subunit">
    <text evidence="2">Homotetramer.</text>
</comment>
<comment type="miscellaneous">
    <text evidence="1">Enantioselectivity is dictated largely by changes in Km.</text>
</comment>
<comment type="similarity">
    <text evidence="5">Belongs to the short-chain dehydrogenases/reductases (SDR) family.</text>
</comment>
<feature type="chain" id="PRO_0000454346" description="2-(S)-hydroxypropyl-CoM dehydrogenase 3">
    <location>
        <begin position="1"/>
        <end position="255"/>
    </location>
</feature>
<feature type="active site" description="Proton acceptor" evidence="6 7">
    <location>
        <position position="156"/>
    </location>
</feature>
<feature type="binding site" evidence="2 9 10">
    <location>
        <position position="19"/>
    </location>
    <ligand>
        <name>NAD(+)</name>
        <dbReference type="ChEBI" id="CHEBI:57540"/>
    </ligand>
</feature>
<feature type="binding site" evidence="2 9 10">
    <location>
        <position position="38"/>
    </location>
    <ligand>
        <name>NAD(+)</name>
        <dbReference type="ChEBI" id="CHEBI:57540"/>
    </ligand>
</feature>
<feature type="binding site" evidence="2 9 10">
    <location>
        <begin position="64"/>
        <end position="65"/>
    </location>
    <ligand>
        <name>NAD(+)</name>
        <dbReference type="ChEBI" id="CHEBI:57540"/>
    </ligand>
</feature>
<feature type="binding site" evidence="2 9 10">
    <location>
        <position position="91"/>
    </location>
    <ligand>
        <name>NAD(+)</name>
        <dbReference type="ChEBI" id="CHEBI:57540"/>
    </ligand>
</feature>
<feature type="binding site" evidence="2 10">
    <location>
        <position position="143"/>
    </location>
    <ligand>
        <name>(S)-2-hydroxypropyl-coenzyme M</name>
        <dbReference type="ChEBI" id="CHEBI:58430"/>
    </ligand>
</feature>
<feature type="binding site" evidence="2 10">
    <location>
        <position position="156"/>
    </location>
    <ligand>
        <name>(S)-2-hydroxypropyl-coenzyme M</name>
        <dbReference type="ChEBI" id="CHEBI:58430"/>
    </ligand>
</feature>
<feature type="binding site" evidence="2 9 10">
    <location>
        <position position="160"/>
    </location>
    <ligand>
        <name>NAD(+)</name>
        <dbReference type="ChEBI" id="CHEBI:57540"/>
    </ligand>
</feature>
<feature type="binding site" evidence="2 10">
    <location>
        <position position="188"/>
    </location>
    <ligand>
        <name>(S)-2-hydroxypropyl-coenzyme M</name>
        <dbReference type="ChEBI" id="CHEBI:58430"/>
    </ligand>
</feature>
<feature type="binding site" evidence="2 9 10">
    <location>
        <begin position="189"/>
        <end position="193"/>
    </location>
    <ligand>
        <name>NAD(+)</name>
        <dbReference type="ChEBI" id="CHEBI:57540"/>
    </ligand>
</feature>
<feature type="binding site" evidence="2 10">
    <location>
        <position position="215"/>
    </location>
    <ligand>
        <name>(S)-2-hydroxypropyl-coenzyme M</name>
        <dbReference type="ChEBI" id="CHEBI:58430"/>
    </ligand>
</feature>
<feature type="site" description="Transition state stabilizer" evidence="6 7">
    <location>
        <position position="143"/>
    </location>
</feature>
<feature type="site" description="Lowers pKa of active site Tyr" evidence="6 7">
    <location>
        <position position="160"/>
    </location>
</feature>
<feature type="mutagenesis site" description="Retains very weak activity." evidence="1">
    <original>S</original>
    <variation>A</variation>
    <location>
        <position position="143"/>
    </location>
</feature>
<feature type="mutagenesis site" description="Retains some activity but with more than 2200-fold decrease in catalytic efficiency." evidence="1">
    <original>Y</original>
    <variation>A</variation>
    <location>
        <position position="156"/>
    </location>
</feature>
<feature type="mutagenesis site" description="Loss of activity." evidence="1">
    <original>Y</original>
    <variation>F</variation>
    <location>
        <position position="156"/>
    </location>
</feature>
<feature type="mutagenesis site" description="Loss of activity." evidence="1">
    <original>K</original>
    <variation>A</variation>
    <location>
        <position position="160"/>
    </location>
</feature>
<feature type="mutagenesis site" description="Severely impaired in the oxidation of S-HPC or reduction of 2-KPC but largely unaffected in the oxidation and reduction of aliphatic alcohols and ketones." evidence="1">
    <original>R</original>
    <variation>A</variation>
    <location>
        <position position="211"/>
    </location>
</feature>
<feature type="mutagenesis site" description="Severely impaired in the oxidation of S-HPC or reduction of 2-KPC but largely unaffected in the oxidation and reduction of aliphatic alcohols and ketones." evidence="1">
    <original>K</original>
    <variation>A</variation>
    <location>
        <position position="214"/>
    </location>
</feature>
<feature type="turn" evidence="11">
    <location>
        <begin position="4"/>
        <end position="7"/>
    </location>
</feature>
<feature type="strand" evidence="11">
    <location>
        <begin position="9"/>
        <end position="13"/>
    </location>
</feature>
<feature type="turn" evidence="11">
    <location>
        <begin position="14"/>
        <end position="16"/>
    </location>
</feature>
<feature type="helix" evidence="11">
    <location>
        <begin position="18"/>
        <end position="29"/>
    </location>
</feature>
<feature type="strand" evidence="11">
    <location>
        <begin position="33"/>
        <end position="40"/>
    </location>
</feature>
<feature type="helix" evidence="11">
    <location>
        <begin position="41"/>
        <end position="51"/>
    </location>
</feature>
<feature type="strand" evidence="11">
    <location>
        <begin position="58"/>
        <end position="62"/>
    </location>
</feature>
<feature type="helix" evidence="11">
    <location>
        <begin position="68"/>
        <end position="82"/>
    </location>
</feature>
<feature type="strand" evidence="11">
    <location>
        <begin position="86"/>
        <end position="90"/>
    </location>
</feature>
<feature type="turn" evidence="11">
    <location>
        <begin position="100"/>
        <end position="102"/>
    </location>
</feature>
<feature type="helix" evidence="11">
    <location>
        <begin position="105"/>
        <end position="132"/>
    </location>
</feature>
<feature type="strand" evidence="11">
    <location>
        <begin position="136"/>
        <end position="141"/>
    </location>
</feature>
<feature type="helix" evidence="11">
    <location>
        <begin position="144"/>
        <end position="146"/>
    </location>
</feature>
<feature type="helix" evidence="11">
    <location>
        <begin position="154"/>
        <end position="174"/>
    </location>
</feature>
<feature type="helix" evidence="11">
    <location>
        <begin position="175"/>
        <end position="177"/>
    </location>
</feature>
<feature type="strand" evidence="11">
    <location>
        <begin position="179"/>
        <end position="186"/>
    </location>
</feature>
<feature type="helix" evidence="11">
    <location>
        <begin position="193"/>
        <end position="197"/>
    </location>
</feature>
<feature type="helix" evidence="11">
    <location>
        <begin position="206"/>
        <end position="212"/>
    </location>
</feature>
<feature type="helix" evidence="11">
    <location>
        <begin position="223"/>
        <end position="234"/>
    </location>
</feature>
<feature type="helix" evidence="11">
    <location>
        <begin position="236"/>
        <end position="238"/>
    </location>
</feature>
<feature type="strand" evidence="11">
    <location>
        <begin position="245"/>
        <end position="249"/>
    </location>
</feature>
<feature type="helix" evidence="11">
    <location>
        <begin position="252"/>
        <end position="254"/>
    </location>
</feature>
<accession>A7IQH5</accession>
<geneLocation type="plasmid">
    <name>pXAUT01</name>
</geneLocation>
<sequence length="255" mass="25473">MSNRLKNEVIAITGGGAGIGLAIASAALREGAKVALIDLDQGLAERSAAMLSTGGAVAKGFGADVTKAADITAAITSAEQTIGSLTGLVNNAGIAGFGSVHDADAAAWDRIMAVNVTGTFLASKAALAGMLERHKGTIVNFGSVAGLVGIPTMAAYCAAKGAIVNLTRQMAADYSGRGVRVNAVCPGTVTSTGMGQQLLGSDTSPEVQARRLAKYPIGRFGTPEDIAEAVIFLLSDQAAFVTGAAFAVDGGMTAI</sequence>